<feature type="chain" id="PRO_0000323363" description="Small ribosomal subunit protein uS11c">
    <location>
        <begin position="1"/>
        <end position="130"/>
    </location>
</feature>
<keyword id="KW-0150">Chloroplast</keyword>
<keyword id="KW-0934">Plastid</keyword>
<keyword id="KW-0687">Ribonucleoprotein</keyword>
<keyword id="KW-0689">Ribosomal protein</keyword>
<keyword id="KW-0694">RNA-binding</keyword>
<keyword id="KW-0699">rRNA-binding</keyword>
<reference key="1">
    <citation type="journal article" date="2007" name="Mol. Biol. Evol.">
        <title>Chloroplast genome (cpDNA) of Cycas taitungensis and 56 cp protein-coding genes of Gnetum parvifolium: insights into cpDNA evolution and phylogeny of extant seed plants.</title>
        <authorList>
            <person name="Wu C.-S."/>
            <person name="Wang Y.-N."/>
            <person name="Liu S.-M."/>
            <person name="Chaw S.-M."/>
        </authorList>
    </citation>
    <scope>NUCLEOTIDE SEQUENCE [LARGE SCALE GENOMIC DNA]</scope>
</reference>
<gene>
    <name evidence="1" type="primary">rps11</name>
</gene>
<evidence type="ECO:0000255" key="1">
    <source>
        <dbReference type="HAMAP-Rule" id="MF_01310"/>
    </source>
</evidence>
<evidence type="ECO:0000305" key="2"/>
<sequence length="130" mass="14210">MSKPIRKIGSRRNERRIPKGVIHVQASFNNTIVTVTDVRGQVVSWSSAGACGFKGTKRSTPFAAQTAAENAIRTLMDQGMERAEVMISGPGPGRDTALRAIRRSGVLLSFVRDVTPMPHNGCRPPKKRRV</sequence>
<name>RR11_CYCTA</name>
<geneLocation type="chloroplast"/>
<organism>
    <name type="scientific">Cycas taitungensis</name>
    <name type="common">Prince sago</name>
    <name type="synonym">Cycas taiwaniana</name>
    <dbReference type="NCBI Taxonomy" id="54799"/>
    <lineage>
        <taxon>Eukaryota</taxon>
        <taxon>Viridiplantae</taxon>
        <taxon>Streptophyta</taxon>
        <taxon>Embryophyta</taxon>
        <taxon>Tracheophyta</taxon>
        <taxon>Spermatophyta</taxon>
        <taxon>Cycadidae</taxon>
        <taxon>Cycadales</taxon>
        <taxon>Cycadaceae</taxon>
        <taxon>Cycas</taxon>
    </lineage>
</organism>
<dbReference type="EMBL" id="AP009339">
    <property type="protein sequence ID" value="BAF64980.1"/>
    <property type="molecule type" value="Genomic_DNA"/>
</dbReference>
<dbReference type="RefSeq" id="YP_001312239.1">
    <property type="nucleotide sequence ID" value="NC_009618.1"/>
</dbReference>
<dbReference type="SMR" id="A6H5L4"/>
<dbReference type="GeneID" id="5309583"/>
<dbReference type="GO" id="GO:0009507">
    <property type="term" value="C:chloroplast"/>
    <property type="evidence" value="ECO:0007669"/>
    <property type="project" value="UniProtKB-SubCell"/>
</dbReference>
<dbReference type="GO" id="GO:1990904">
    <property type="term" value="C:ribonucleoprotein complex"/>
    <property type="evidence" value="ECO:0007669"/>
    <property type="project" value="UniProtKB-KW"/>
</dbReference>
<dbReference type="GO" id="GO:0005840">
    <property type="term" value="C:ribosome"/>
    <property type="evidence" value="ECO:0007669"/>
    <property type="project" value="UniProtKB-KW"/>
</dbReference>
<dbReference type="GO" id="GO:0019843">
    <property type="term" value="F:rRNA binding"/>
    <property type="evidence" value="ECO:0007669"/>
    <property type="project" value="UniProtKB-UniRule"/>
</dbReference>
<dbReference type="GO" id="GO:0003735">
    <property type="term" value="F:structural constituent of ribosome"/>
    <property type="evidence" value="ECO:0007669"/>
    <property type="project" value="InterPro"/>
</dbReference>
<dbReference type="GO" id="GO:0006412">
    <property type="term" value="P:translation"/>
    <property type="evidence" value="ECO:0007669"/>
    <property type="project" value="UniProtKB-UniRule"/>
</dbReference>
<dbReference type="FunFam" id="3.30.420.80:FF:000003">
    <property type="entry name" value="30S ribosomal protein S11, chloroplastic"/>
    <property type="match status" value="1"/>
</dbReference>
<dbReference type="Gene3D" id="3.30.420.80">
    <property type="entry name" value="Ribosomal protein S11"/>
    <property type="match status" value="1"/>
</dbReference>
<dbReference type="HAMAP" id="MF_01310">
    <property type="entry name" value="Ribosomal_uS11"/>
    <property type="match status" value="1"/>
</dbReference>
<dbReference type="InterPro" id="IPR001971">
    <property type="entry name" value="Ribosomal_uS11"/>
</dbReference>
<dbReference type="InterPro" id="IPR019981">
    <property type="entry name" value="Ribosomal_uS11_bac-type"/>
</dbReference>
<dbReference type="InterPro" id="IPR018102">
    <property type="entry name" value="Ribosomal_uS11_CS"/>
</dbReference>
<dbReference type="InterPro" id="IPR036967">
    <property type="entry name" value="Ribosomal_uS11_sf"/>
</dbReference>
<dbReference type="NCBIfam" id="NF003698">
    <property type="entry name" value="PRK05309.1"/>
    <property type="match status" value="1"/>
</dbReference>
<dbReference type="NCBIfam" id="TIGR03632">
    <property type="entry name" value="uS11_bact"/>
    <property type="match status" value="1"/>
</dbReference>
<dbReference type="PANTHER" id="PTHR11759">
    <property type="entry name" value="40S RIBOSOMAL PROTEIN S14/30S RIBOSOMAL PROTEIN S11"/>
    <property type="match status" value="1"/>
</dbReference>
<dbReference type="Pfam" id="PF00411">
    <property type="entry name" value="Ribosomal_S11"/>
    <property type="match status" value="1"/>
</dbReference>
<dbReference type="PIRSF" id="PIRSF002131">
    <property type="entry name" value="Ribosomal_S11"/>
    <property type="match status" value="1"/>
</dbReference>
<dbReference type="SUPFAM" id="SSF53137">
    <property type="entry name" value="Translational machinery components"/>
    <property type="match status" value="1"/>
</dbReference>
<dbReference type="PROSITE" id="PS00054">
    <property type="entry name" value="RIBOSOMAL_S11"/>
    <property type="match status" value="1"/>
</dbReference>
<accession>A6H5L4</accession>
<comment type="subunit">
    <text evidence="1">Part of the 30S ribosomal subunit.</text>
</comment>
<comment type="subcellular location">
    <subcellularLocation>
        <location>Plastid</location>
        <location>Chloroplast</location>
    </subcellularLocation>
</comment>
<comment type="similarity">
    <text evidence="1">Belongs to the universal ribosomal protein uS11 family.</text>
</comment>
<proteinExistence type="inferred from homology"/>
<protein>
    <recommendedName>
        <fullName evidence="1">Small ribosomal subunit protein uS11c</fullName>
    </recommendedName>
    <alternativeName>
        <fullName evidence="2">30S ribosomal protein S11, chloroplastic</fullName>
    </alternativeName>
</protein>